<evidence type="ECO:0000255" key="1">
    <source>
        <dbReference type="HAMAP-Rule" id="MF_00444"/>
    </source>
</evidence>
<feature type="chain" id="PRO_0000179696" description="Probable ATP-dependent Clp protease proteolytic subunit 3">
    <location>
        <begin position="1"/>
        <end position="202"/>
    </location>
</feature>
<feature type="active site" description="Nucleophile" evidence="1">
    <location>
        <position position="101"/>
    </location>
</feature>
<feature type="active site" evidence="1">
    <location>
        <position position="126"/>
    </location>
</feature>
<reference key="1">
    <citation type="journal article" date="1996" name="DNA Res.">
        <title>Sequence analysis of the genome of the unicellular cyanobacterium Synechocystis sp. strain PCC6803. II. Sequence determination of the entire genome and assignment of potential protein-coding regions.</title>
        <authorList>
            <person name="Kaneko T."/>
            <person name="Sato S."/>
            <person name="Kotani H."/>
            <person name="Tanaka A."/>
            <person name="Asamizu E."/>
            <person name="Nakamura Y."/>
            <person name="Miyajima N."/>
            <person name="Hirosawa M."/>
            <person name="Sugiura M."/>
            <person name="Sasamoto S."/>
            <person name="Kimura T."/>
            <person name="Hosouchi T."/>
            <person name="Matsuno A."/>
            <person name="Muraki A."/>
            <person name="Nakazaki N."/>
            <person name="Naruo K."/>
            <person name="Okumura S."/>
            <person name="Shimpo S."/>
            <person name="Takeuchi C."/>
            <person name="Wada T."/>
            <person name="Watanabe A."/>
            <person name="Yamada M."/>
            <person name="Yasuda M."/>
            <person name="Tabata S."/>
        </authorList>
    </citation>
    <scope>NUCLEOTIDE SEQUENCE [LARGE SCALE GENOMIC DNA]</scope>
    <source>
        <strain>ATCC 27184 / PCC 6803 / Kazusa</strain>
    </source>
</reference>
<name>CLPP3_SYNY3</name>
<protein>
    <recommendedName>
        <fullName>Probable ATP-dependent Clp protease proteolytic subunit 3</fullName>
        <ecNumber evidence="1">3.4.21.92</ecNumber>
    </recommendedName>
    <alternativeName>
        <fullName evidence="1">Endopeptidase Clp 3</fullName>
    </alternativeName>
</protein>
<gene>
    <name evidence="1" type="primary">clpP3</name>
    <name type="ordered locus">slr0165</name>
</gene>
<comment type="function">
    <text evidence="1">Cleaves peptides in various proteins in a process that requires ATP hydrolysis. Has a chymotrypsin-like activity. Plays a major role in the degradation of misfolded proteins.</text>
</comment>
<comment type="catalytic activity">
    <reaction evidence="1">
        <text>Hydrolysis of proteins to small peptides in the presence of ATP and magnesium. alpha-casein is the usual test substrate. In the absence of ATP, only oligopeptides shorter than five residues are hydrolyzed (such as succinyl-Leu-Tyr-|-NHMec, and Leu-Tyr-Leu-|-Tyr-Trp, in which cleavage of the -Tyr-|-Leu- and -Tyr-|-Trp bonds also occurs).</text>
        <dbReference type="EC" id="3.4.21.92"/>
    </reaction>
</comment>
<comment type="subunit">
    <text evidence="1">Fourteen ClpP subunits assemble into 2 heptameric rings which stack back to back to give a disk-like structure with a central cavity, resembling the structure of eukaryotic proteasomes.</text>
</comment>
<comment type="subcellular location">
    <subcellularLocation>
        <location evidence="1">Cytoplasm</location>
    </subcellularLocation>
</comment>
<comment type="similarity">
    <text evidence="1">Belongs to the peptidase S14 family.</text>
</comment>
<keyword id="KW-0963">Cytoplasm</keyword>
<keyword id="KW-0378">Hydrolase</keyword>
<keyword id="KW-0645">Protease</keyword>
<keyword id="KW-1185">Reference proteome</keyword>
<keyword id="KW-0720">Serine protease</keyword>
<accession>P74467</accession>
<proteinExistence type="inferred from homology"/>
<organism>
    <name type="scientific">Synechocystis sp. (strain ATCC 27184 / PCC 6803 / Kazusa)</name>
    <dbReference type="NCBI Taxonomy" id="1111708"/>
    <lineage>
        <taxon>Bacteria</taxon>
        <taxon>Bacillati</taxon>
        <taxon>Cyanobacteriota</taxon>
        <taxon>Cyanophyceae</taxon>
        <taxon>Synechococcales</taxon>
        <taxon>Merismopediaceae</taxon>
        <taxon>Synechocystis</taxon>
    </lineage>
</organism>
<dbReference type="EC" id="3.4.21.92" evidence="1"/>
<dbReference type="EMBL" id="BA000022">
    <property type="protein sequence ID" value="BAA18568.1"/>
    <property type="molecule type" value="Genomic_DNA"/>
</dbReference>
<dbReference type="PIR" id="S76439">
    <property type="entry name" value="S76439"/>
</dbReference>
<dbReference type="SMR" id="P74467"/>
<dbReference type="IntAct" id="P74467">
    <property type="interactions" value="3"/>
</dbReference>
<dbReference type="STRING" id="1148.gene:10499450"/>
<dbReference type="MEROPS" id="S14.001"/>
<dbReference type="PaxDb" id="1148-1653656"/>
<dbReference type="EnsemblBacteria" id="BAA18568">
    <property type="protein sequence ID" value="BAA18568"/>
    <property type="gene ID" value="BAA18568"/>
</dbReference>
<dbReference type="KEGG" id="syn:slr0165"/>
<dbReference type="eggNOG" id="COG0740">
    <property type="taxonomic scope" value="Bacteria"/>
</dbReference>
<dbReference type="InParanoid" id="P74467"/>
<dbReference type="PhylomeDB" id="P74467"/>
<dbReference type="BRENDA" id="3.4.21.92">
    <property type="organism ID" value="382"/>
</dbReference>
<dbReference type="Proteomes" id="UP000001425">
    <property type="component" value="Chromosome"/>
</dbReference>
<dbReference type="GO" id="GO:0005737">
    <property type="term" value="C:cytoplasm"/>
    <property type="evidence" value="ECO:0007669"/>
    <property type="project" value="UniProtKB-SubCell"/>
</dbReference>
<dbReference type="GO" id="GO:0009368">
    <property type="term" value="C:endopeptidase Clp complex"/>
    <property type="evidence" value="ECO:0000318"/>
    <property type="project" value="GO_Central"/>
</dbReference>
<dbReference type="GO" id="GO:0004176">
    <property type="term" value="F:ATP-dependent peptidase activity"/>
    <property type="evidence" value="ECO:0000318"/>
    <property type="project" value="GO_Central"/>
</dbReference>
<dbReference type="GO" id="GO:0051117">
    <property type="term" value="F:ATPase binding"/>
    <property type="evidence" value="ECO:0000318"/>
    <property type="project" value="GO_Central"/>
</dbReference>
<dbReference type="GO" id="GO:0004252">
    <property type="term" value="F:serine-type endopeptidase activity"/>
    <property type="evidence" value="ECO:0000318"/>
    <property type="project" value="GO_Central"/>
</dbReference>
<dbReference type="GO" id="GO:0006515">
    <property type="term" value="P:protein quality control for misfolded or incompletely synthesized proteins"/>
    <property type="evidence" value="ECO:0000318"/>
    <property type="project" value="GO_Central"/>
</dbReference>
<dbReference type="CDD" id="cd07017">
    <property type="entry name" value="S14_ClpP_2"/>
    <property type="match status" value="1"/>
</dbReference>
<dbReference type="FunFam" id="3.90.226.10:FF:000001">
    <property type="entry name" value="ATP-dependent Clp protease proteolytic subunit"/>
    <property type="match status" value="1"/>
</dbReference>
<dbReference type="Gene3D" id="3.90.226.10">
    <property type="entry name" value="2-enoyl-CoA Hydratase, Chain A, domain 1"/>
    <property type="match status" value="1"/>
</dbReference>
<dbReference type="HAMAP" id="MF_00444">
    <property type="entry name" value="ClpP"/>
    <property type="match status" value="1"/>
</dbReference>
<dbReference type="InterPro" id="IPR001907">
    <property type="entry name" value="ClpP"/>
</dbReference>
<dbReference type="InterPro" id="IPR029045">
    <property type="entry name" value="ClpP/crotonase-like_dom_sf"/>
</dbReference>
<dbReference type="InterPro" id="IPR023562">
    <property type="entry name" value="ClpP/TepA"/>
</dbReference>
<dbReference type="InterPro" id="IPR033135">
    <property type="entry name" value="ClpP_His_AS"/>
</dbReference>
<dbReference type="InterPro" id="IPR018215">
    <property type="entry name" value="ClpP_Ser_AS"/>
</dbReference>
<dbReference type="NCBIfam" id="NF001368">
    <property type="entry name" value="PRK00277.1"/>
    <property type="match status" value="1"/>
</dbReference>
<dbReference type="NCBIfam" id="NF009205">
    <property type="entry name" value="PRK12553.1"/>
    <property type="match status" value="1"/>
</dbReference>
<dbReference type="PANTHER" id="PTHR10381">
    <property type="entry name" value="ATP-DEPENDENT CLP PROTEASE PROTEOLYTIC SUBUNIT"/>
    <property type="match status" value="1"/>
</dbReference>
<dbReference type="PANTHER" id="PTHR10381:SF70">
    <property type="entry name" value="ATP-DEPENDENT CLP PROTEASE PROTEOLYTIC SUBUNIT"/>
    <property type="match status" value="1"/>
</dbReference>
<dbReference type="Pfam" id="PF00574">
    <property type="entry name" value="CLP_protease"/>
    <property type="match status" value="1"/>
</dbReference>
<dbReference type="PRINTS" id="PR00127">
    <property type="entry name" value="CLPPROTEASEP"/>
</dbReference>
<dbReference type="SUPFAM" id="SSF52096">
    <property type="entry name" value="ClpP/crotonase"/>
    <property type="match status" value="1"/>
</dbReference>
<dbReference type="PROSITE" id="PS00382">
    <property type="entry name" value="CLP_PROTEASE_HIS"/>
    <property type="match status" value="1"/>
</dbReference>
<dbReference type="PROSITE" id="PS00381">
    <property type="entry name" value="CLP_PROTEASE_SER"/>
    <property type="match status" value="1"/>
</dbReference>
<sequence>MPIGVPSVPFRLPGSQYERWIDIYTRLSQERIIFLGQEVNDSIANRIVAFLLYLDSDDPSKPIYLYINSPGGSVTAGMAIYDTMQYIKAEVITICVGLAASMGAFLLASGAPGKRLALPHARIMIHQPMGGTGRRQATDIDIEAREILRIRQQLNEIMAQRTGQTVEKIAKDTDRDYFLSAAEAKEYGLIDKVIENSTMGNN</sequence>